<organism>
    <name type="scientific">Escherichia coli (strain UTI89 / UPEC)</name>
    <dbReference type="NCBI Taxonomy" id="364106"/>
    <lineage>
        <taxon>Bacteria</taxon>
        <taxon>Pseudomonadati</taxon>
        <taxon>Pseudomonadota</taxon>
        <taxon>Gammaproteobacteria</taxon>
        <taxon>Enterobacterales</taxon>
        <taxon>Enterobacteriaceae</taxon>
        <taxon>Escherichia</taxon>
    </lineage>
</organism>
<evidence type="ECO:0000255" key="1">
    <source>
        <dbReference type="HAMAP-Rule" id="MF_01616"/>
    </source>
</evidence>
<evidence type="ECO:0000305" key="2"/>
<protein>
    <recommendedName>
        <fullName evidence="1">Membrane-bound lytic murein transglycosylase C</fullName>
        <ecNumber evidence="1">4.2.2.n1</ecNumber>
    </recommendedName>
    <alternativeName>
        <fullName evidence="1">Murein lyase C</fullName>
    </alternativeName>
</protein>
<feature type="signal peptide" evidence="1">
    <location>
        <begin position="1"/>
        <end position="16"/>
    </location>
</feature>
<feature type="chain" id="PRO_0000335581" description="Membrane-bound lytic murein transglycosylase C">
    <location>
        <begin position="17"/>
        <end position="359"/>
    </location>
</feature>
<feature type="lipid moiety-binding region" description="N-palmitoyl cysteine" evidence="1">
    <location>
        <position position="17"/>
    </location>
</feature>
<feature type="lipid moiety-binding region" description="S-diacylglycerol cysteine" evidence="1">
    <location>
        <position position="17"/>
    </location>
</feature>
<proteinExistence type="inferred from homology"/>
<comment type="function">
    <text evidence="1">Murein-degrading enzyme. May play a role in recycling of muropeptides during cell elongation and/or cell division.</text>
</comment>
<comment type="catalytic activity">
    <reaction evidence="1">
        <text>Exolytic cleavage of the (1-&gt;4)-beta-glycosidic linkage between N-acetylmuramic acid (MurNAc) and N-acetylglucosamine (GlcNAc) residues in peptidoglycan, from either the reducing or the non-reducing ends of the peptidoglycan chains, with concomitant formation of a 1,6-anhydrobond in the MurNAc residue.</text>
        <dbReference type="EC" id="4.2.2.n1"/>
    </reaction>
</comment>
<comment type="subcellular location">
    <subcellularLocation>
        <location evidence="1">Cell outer membrane</location>
        <topology evidence="1">Lipid-anchor</topology>
    </subcellularLocation>
</comment>
<comment type="similarity">
    <text evidence="1">Belongs to the transglycosylase Slt family.</text>
</comment>
<comment type="sequence caution" evidence="2">
    <conflict type="erroneous initiation">
        <sequence resource="EMBL-CDS" id="ABE08802"/>
    </conflict>
</comment>
<name>MLTC_ECOUT</name>
<accession>Q1R762</accession>
<sequence>MKKYLALALIAPLLISCSTTKKGDTYNEAWVKDTNGFDILMGQFAHNIENIWGFKEVVIAGPKDYVKYTDQYQTRSHINFDDGTITIETIAGTEPAAHLRRAIIKTLLMGDDPSSVDLYSDVDDITISKEPFLYGQVVDNTGQPIRWEGRASNFADYLLKNRLKSRSNGLRIIYSVTINMVPNHLDKRAHKYLGMVRQASRKYGVDESLILAIMQTESSFNPYAVSRSDALGLMQVVQHTAGKDVFRSQGKSGTPSRSFLFDPASNIDTGTAYLAMLNNVYLGGIDNPTSRRYAVITAYNGGAGSVLRVFSNDKIQAANIINTMTPGDVYQTLTTRHPSAESRRYLYKVNTAQKSYRRR</sequence>
<gene>
    <name evidence="1" type="primary">mltC</name>
    <name type="ordered locus">UTI89_C3354</name>
</gene>
<reference key="1">
    <citation type="journal article" date="2006" name="Proc. Natl. Acad. Sci. U.S.A.">
        <title>Identification of genes subject to positive selection in uropathogenic strains of Escherichia coli: a comparative genomics approach.</title>
        <authorList>
            <person name="Chen S.L."/>
            <person name="Hung C.-S."/>
            <person name="Xu J."/>
            <person name="Reigstad C.S."/>
            <person name="Magrini V."/>
            <person name="Sabo A."/>
            <person name="Blasiar D."/>
            <person name="Bieri T."/>
            <person name="Meyer R.R."/>
            <person name="Ozersky P."/>
            <person name="Armstrong J.R."/>
            <person name="Fulton R.S."/>
            <person name="Latreille J.P."/>
            <person name="Spieth J."/>
            <person name="Hooton T.M."/>
            <person name="Mardis E.R."/>
            <person name="Hultgren S.J."/>
            <person name="Gordon J.I."/>
        </authorList>
    </citation>
    <scope>NUCLEOTIDE SEQUENCE [LARGE SCALE GENOMIC DNA]</scope>
    <source>
        <strain>UTI89 / UPEC</strain>
    </source>
</reference>
<keyword id="KW-0998">Cell outer membrane</keyword>
<keyword id="KW-0961">Cell wall biogenesis/degradation</keyword>
<keyword id="KW-0449">Lipoprotein</keyword>
<keyword id="KW-0456">Lyase</keyword>
<keyword id="KW-0472">Membrane</keyword>
<keyword id="KW-0564">Palmitate</keyword>
<keyword id="KW-0732">Signal</keyword>
<dbReference type="EC" id="4.2.2.n1" evidence="1"/>
<dbReference type="EMBL" id="CP000243">
    <property type="protein sequence ID" value="ABE08802.1"/>
    <property type="status" value="ALT_INIT"/>
    <property type="molecule type" value="Genomic_DNA"/>
</dbReference>
<dbReference type="RefSeq" id="WP_000760323.1">
    <property type="nucleotide sequence ID" value="NZ_CP064825.1"/>
</dbReference>
<dbReference type="SMR" id="Q1R762"/>
<dbReference type="CAZy" id="GH23">
    <property type="family name" value="Glycoside Hydrolase Family 23"/>
</dbReference>
<dbReference type="GeneID" id="86861053"/>
<dbReference type="KEGG" id="eci:UTI89_C3354"/>
<dbReference type="HOGENOM" id="CLU_044583_0_0_6"/>
<dbReference type="Proteomes" id="UP000001952">
    <property type="component" value="Chromosome"/>
</dbReference>
<dbReference type="GO" id="GO:0009279">
    <property type="term" value="C:cell outer membrane"/>
    <property type="evidence" value="ECO:0007669"/>
    <property type="project" value="UniProtKB-SubCell"/>
</dbReference>
<dbReference type="GO" id="GO:0016798">
    <property type="term" value="F:hydrolase activity, acting on glycosyl bonds"/>
    <property type="evidence" value="ECO:0007669"/>
    <property type="project" value="InterPro"/>
</dbReference>
<dbReference type="GO" id="GO:0008933">
    <property type="term" value="F:peptidoglycan lytic transglycosylase activity"/>
    <property type="evidence" value="ECO:0007669"/>
    <property type="project" value="UniProtKB-UniRule"/>
</dbReference>
<dbReference type="GO" id="GO:0016998">
    <property type="term" value="P:cell wall macromolecule catabolic process"/>
    <property type="evidence" value="ECO:0007669"/>
    <property type="project" value="UniProtKB-UniRule"/>
</dbReference>
<dbReference type="GO" id="GO:0071555">
    <property type="term" value="P:cell wall organization"/>
    <property type="evidence" value="ECO:0007669"/>
    <property type="project" value="UniProtKB-KW"/>
</dbReference>
<dbReference type="GO" id="GO:0000270">
    <property type="term" value="P:peptidoglycan metabolic process"/>
    <property type="evidence" value="ECO:0007669"/>
    <property type="project" value="InterPro"/>
</dbReference>
<dbReference type="CDD" id="cd16893">
    <property type="entry name" value="LT_MltC_MltE"/>
    <property type="match status" value="1"/>
</dbReference>
<dbReference type="FunFam" id="1.10.530.10:FF:000002">
    <property type="entry name" value="Membrane-bound lytic murein transglycosylase C"/>
    <property type="match status" value="1"/>
</dbReference>
<dbReference type="Gene3D" id="1.10.530.10">
    <property type="match status" value="1"/>
</dbReference>
<dbReference type="HAMAP" id="MF_01616">
    <property type="entry name" value="MltC"/>
    <property type="match status" value="1"/>
</dbReference>
<dbReference type="InterPro" id="IPR023346">
    <property type="entry name" value="Lysozyme-like_dom_sf"/>
</dbReference>
<dbReference type="InterPro" id="IPR023664">
    <property type="entry name" value="Murein_transglycosylaseC"/>
</dbReference>
<dbReference type="InterPro" id="IPR024570">
    <property type="entry name" value="Murein_transglycosylaseC_N"/>
</dbReference>
<dbReference type="InterPro" id="IPR000189">
    <property type="entry name" value="Transglyc_AS"/>
</dbReference>
<dbReference type="InterPro" id="IPR008258">
    <property type="entry name" value="Transglycosylase_SLT_dom_1"/>
</dbReference>
<dbReference type="NCBIfam" id="NF008670">
    <property type="entry name" value="PRK11671.1"/>
    <property type="match status" value="1"/>
</dbReference>
<dbReference type="PANTHER" id="PTHR37423:SF2">
    <property type="entry name" value="MEMBRANE-BOUND LYTIC MUREIN TRANSGLYCOSYLASE C"/>
    <property type="match status" value="1"/>
</dbReference>
<dbReference type="PANTHER" id="PTHR37423">
    <property type="entry name" value="SOLUBLE LYTIC MUREIN TRANSGLYCOSYLASE-RELATED"/>
    <property type="match status" value="1"/>
</dbReference>
<dbReference type="Pfam" id="PF11873">
    <property type="entry name" value="Mltc_N"/>
    <property type="match status" value="1"/>
</dbReference>
<dbReference type="Pfam" id="PF01464">
    <property type="entry name" value="SLT"/>
    <property type="match status" value="1"/>
</dbReference>
<dbReference type="SUPFAM" id="SSF53955">
    <property type="entry name" value="Lysozyme-like"/>
    <property type="match status" value="1"/>
</dbReference>
<dbReference type="PROSITE" id="PS51257">
    <property type="entry name" value="PROKAR_LIPOPROTEIN"/>
    <property type="match status" value="1"/>
</dbReference>
<dbReference type="PROSITE" id="PS00922">
    <property type="entry name" value="TRANSGLYCOSYLASE"/>
    <property type="match status" value="1"/>
</dbReference>